<evidence type="ECO:0000250" key="1"/>
<evidence type="ECO:0000255" key="2"/>
<evidence type="ECO:0000256" key="3">
    <source>
        <dbReference type="SAM" id="MobiDB-lite"/>
    </source>
</evidence>
<evidence type="ECO:0000269" key="4">
    <source>
    </source>
</evidence>
<evidence type="ECO:0000269" key="5">
    <source>
    </source>
</evidence>
<evidence type="ECO:0000269" key="6">
    <source>
    </source>
</evidence>
<evidence type="ECO:0000269" key="7">
    <source>
    </source>
</evidence>
<evidence type="ECO:0000269" key="8">
    <source>
    </source>
</evidence>
<evidence type="ECO:0000269" key="9">
    <source>
    </source>
</evidence>
<evidence type="ECO:0000269" key="10">
    <source>
    </source>
</evidence>
<evidence type="ECO:0000269" key="11">
    <source>
    </source>
</evidence>
<evidence type="ECO:0000269" key="12">
    <source>
    </source>
</evidence>
<evidence type="ECO:0000269" key="13">
    <source>
    </source>
</evidence>
<evidence type="ECO:0000305" key="14"/>
<evidence type="ECO:0007829" key="15">
    <source>
        <dbReference type="PDB" id="5MZN"/>
    </source>
</evidence>
<evidence type="ECO:0007829" key="16">
    <source>
        <dbReference type="PDB" id="6O3W"/>
    </source>
</evidence>
<evidence type="ECO:0007829" key="17">
    <source>
        <dbReference type="PDB" id="8RAM"/>
    </source>
</evidence>
<organism>
    <name type="scientific">Saccharomyces cerevisiae (strain ATCC 204508 / S288c)</name>
    <name type="common">Baker's yeast</name>
    <dbReference type="NCBI Taxonomy" id="559292"/>
    <lineage>
        <taxon>Eukaryota</taxon>
        <taxon>Fungi</taxon>
        <taxon>Dikarya</taxon>
        <taxon>Ascomycota</taxon>
        <taxon>Saccharomycotina</taxon>
        <taxon>Saccharomycetes</taxon>
        <taxon>Saccharomycetales</taxon>
        <taxon>Saccharomycetaceae</taxon>
        <taxon>Saccharomyces</taxon>
    </lineage>
</organism>
<proteinExistence type="evidence at protein level"/>
<sequence length="2231" mass="252497">MNSNNPDNNNSNNINNNNKDKDIAPNSDVQLATVYTKAKSYIPQIEQVYQGTNPNIQEAKLLGELLQVLAEVPKGTHLFCDPILEPISIFSLTIFSFNEEATATWLKNHFNPILSVCDKCILNFARGKCKMLQHFAIQRHVPHEHVAKFNDIVCQWRVEAVFPILRNISVNDNTGINITNEIETAMYECLCNPHMLRLNKQLKATFEAIFKFFYDTKHRLLDVTNPLSIKTFISGVIFCWCEGSKEENEWSRAFLKDLYSRNFHINLSNLTPDIIEEVYIHILFLQNPANWTEIVVSQFWSRLLPVFNLFDKDVFIEYFQVPKNVESLKKTFKFPLEPIFKMWYNHLSKSYHDKPLDFLLRGLTMFLNKFGSEFWSKIEPFTFHSILDIIFNRDSFPIKLIKIQDNPIVEHQTEVYFQLTGSVTDLLSWTLPFYHALSPSKRIQMVRKVSMAFLRIIANYPSLKSIPKACLMNSATALLRAVLTIKENERAMLYKNDEFETVLLTKTDSRALLNNPLIQDIIIRSASNPNDFYPGLGAASASVATSTMMVLAECIDFDILLLCHRTFKLYSGKPISEIPISTNVLENVTNKIDLRSFHDGPLLAKQLLVSLKNINGLLIVPSNTAVAEAHNALNQKFLLLSTRLMEKFADILPGQLSKILADEDASQGFWSCIFSSDKHLYQAATNILYNTFDVEGRLEGILAILNSNLTVNLKNINVMLQRLINCEFYEPCPRAVRVLMDVVSAFVDPISGVFANFQTLKSQNTEKEFLKFWESCWLFLDTIYKFTLKWASKYDYSELENFTKDTLDLSRSLVDSFREFSDILHDQTKNLLLNVLETFKNMLYWLRLSDEVLLESCVRLIISTSDLAHEKHVKVDDSLVEMMAKYASKAKRFSNKLTEQQASEILQKAKIFNKALTEEVATEAENYRKEKELSRLGKVIDLTDSVPASPSLSPSLSSTIASSSAESRADYLQRKALSSSITGRPRVAQPKITSFGTFQSSANAKLHRTKPVKPLSKMELARMQLLNNRVVHPPSAPAFHTKSRGLSNKNDDSSSEESDNDIESARELFAIAKAKGKGIQTVDINGKVVKRQTAAELAKQELEHMRKRLNVDMNPLYEIILQWDYTRNSEYPDDEPIGNYSDVKDFFNSPADYQKVMKPLLLLESWQGLCSSRDREDYKPFSIIVGNRTAVSDFYDVYASVAKQVIQDCGISESDLIVMAYLPDFRPDKRLSSDDFKKAQHTCLAKVRTLKNTKGGNVDVTLRIHRNHSFSKFLTLRSEIYCVKVMQMTTIEREYSTLEGLEYYDLVGQILQAKPSPPVNVDAAEIETVKKSYKLNTSQAEAIVNSVSKEGFSLIQGPPGTGKTKTILGIIGYFLSTKNASSSNVIKVPLEKNSSNTEQLLKKQKILICAPSNAAVDEICLRLKSGVYDKQGHQFKPQLVRVGRSDVVNVAIKDLTLEELVDKRIGERNYEIRTDPELERKFNNAVTKRRELRGKLDSESGNPESPMSTEDISKLQLKIRELSKIINELGRDRDEMREKNSVNYRNRDLDRRNAQAHILAVSDIICSTLSGSAHDVLATMGIKFDTVIIDEACQCTELSSIIPLRYGGKRCIMVGDPNQLPPTVLSGAASNFKYNQSLFVRMEKNSSPYLLDVQYRMHPSISKFPSSEFYQGRLKDGPGMDILNKRPWHQLEPLAPYKFFDIISGRQEQNAKTMSYTNMEEIRVAIELVDYLFRKFDNKIDFTGKIGIISPYREQMQKMRKEFARYFGGMINKSIDFNTIDGFQGQEKEIILISCVRADDTKSSVGFLKDFRRMNVALTRAKTSIWVLGHQRSLAKSKLWRDLIEDAKDRSCLAYACSGFLDPRNNRAQSILRKFNVPVPSEQEDDYKLPMEYITQGPDEVKSNKDTKKRRVVDEGEEADKAVKKKKKEKKKEKKKSKADDKKKNNKKAESPSTSSGTKKKSSIFGGMSVPSAVVPKTFPDVDSNKKAAAVVGKKKNNKHVCFSDDVSFIPRNDEPEIKVTRSLSSVLKEKQLGLKETRTISPPEISNNEDDDDEDDYTPSISDSSLMKSEANGRNNRVASHNQNFSASIYDDPQVSQAKQTQVPAAITKHRSSNSVLSGGSSRILTASDYGEPNQNGQNGANRTLSQHVGNANQYSTAPVGTGELHETLPAHPQDSYPAEAEDPYDLNPHPQPQSSAFKGPGSGPTGTRNSSRRNASSSPFIPKKRKPRS</sequence>
<dbReference type="EC" id="3.6.4.-"/>
<dbReference type="EMBL" id="U20939">
    <property type="protein sequence ID" value="AAB67502.1"/>
    <property type="molecule type" value="Genomic_DNA"/>
</dbReference>
<dbReference type="EMBL" id="U21094">
    <property type="protein sequence ID" value="AAB67523.1"/>
    <property type="molecule type" value="Genomic_DNA"/>
</dbReference>
<dbReference type="EMBL" id="M74589">
    <property type="protein sequence ID" value="AAB63976.1"/>
    <property type="status" value="ALT_FRAME"/>
    <property type="molecule type" value="mRNA"/>
</dbReference>
<dbReference type="EMBL" id="BK006945">
    <property type="protein sequence ID" value="DAA09731.1"/>
    <property type="molecule type" value="Genomic_DNA"/>
</dbReference>
<dbReference type="PIR" id="S53416">
    <property type="entry name" value="S53416"/>
</dbReference>
<dbReference type="RefSeq" id="NP_013534.3">
    <property type="nucleotide sequence ID" value="NM_001182318.3"/>
</dbReference>
<dbReference type="PDB" id="5MZN">
    <property type="method" value="X-ray"/>
    <property type="resolution" value="1.79 A"/>
    <property type="chains" value="A=1095-1470, A=1525-1902"/>
</dbReference>
<dbReference type="PDB" id="6GC3">
    <property type="method" value="NMR"/>
    <property type="chains" value="B=2052-2063"/>
</dbReference>
<dbReference type="PDB" id="6I59">
    <property type="method" value="X-ray"/>
    <property type="resolution" value="2.95 A"/>
    <property type="chains" value="A=1095-1470, A=1539-1904"/>
</dbReference>
<dbReference type="PDB" id="6O3W">
    <property type="method" value="X-ray"/>
    <property type="resolution" value="2.10 A"/>
    <property type="chains" value="C/D=1882-1895"/>
</dbReference>
<dbReference type="PDB" id="6O3X">
    <property type="method" value="X-ray"/>
    <property type="resolution" value="1.99 A"/>
    <property type="chains" value="D/E/F=2053-2064"/>
</dbReference>
<dbReference type="PDB" id="6O3Y">
    <property type="method" value="X-ray"/>
    <property type="resolution" value="2.80 A"/>
    <property type="chains" value="D/E/F=2181-2193"/>
</dbReference>
<dbReference type="PDB" id="8RAM">
    <property type="method" value="EM"/>
    <property type="resolution" value="2.80 A"/>
    <property type="chains" value="O=1-2231"/>
</dbReference>
<dbReference type="PDB" id="8RAN">
    <property type="method" value="EM"/>
    <property type="resolution" value="3.25 A"/>
    <property type="chains" value="O=1-2231"/>
</dbReference>
<dbReference type="PDB" id="8RAO">
    <property type="method" value="EM"/>
    <property type="resolution" value="4.40 A"/>
    <property type="chains" value="O=1-2231"/>
</dbReference>
<dbReference type="PDB" id="8RAP">
    <property type="method" value="EM"/>
    <property type="resolution" value="4.30 A"/>
    <property type="chains" value="O=1-2231"/>
</dbReference>
<dbReference type="PDBsum" id="5MZN"/>
<dbReference type="PDBsum" id="6GC3"/>
<dbReference type="PDBsum" id="6I59"/>
<dbReference type="PDBsum" id="6O3W"/>
<dbReference type="PDBsum" id="6O3X"/>
<dbReference type="PDBsum" id="6O3Y"/>
<dbReference type="PDBsum" id="8RAM"/>
<dbReference type="PDBsum" id="8RAN"/>
<dbReference type="PDBsum" id="8RAO"/>
<dbReference type="PDBsum" id="8RAP"/>
<dbReference type="EMDB" id="EMD-19019"/>
<dbReference type="EMDB" id="EMD-19020"/>
<dbReference type="EMDB" id="EMD-19021"/>
<dbReference type="EMDB" id="EMD-19022"/>
<dbReference type="SMR" id="Q00416"/>
<dbReference type="BioGRID" id="31689">
    <property type="interactions" value="519"/>
</dbReference>
<dbReference type="ComplexPortal" id="CPX-1316">
    <property type="entry name" value="NRD1 snoRNA termination complex"/>
</dbReference>
<dbReference type="DIP" id="DIP-881N"/>
<dbReference type="FunCoup" id="Q00416">
    <property type="interactions" value="430"/>
</dbReference>
<dbReference type="IntAct" id="Q00416">
    <property type="interactions" value="131"/>
</dbReference>
<dbReference type="MINT" id="Q00416"/>
<dbReference type="STRING" id="4932.YLR430W"/>
<dbReference type="GlyGen" id="Q00416">
    <property type="glycosylation" value="1 site"/>
</dbReference>
<dbReference type="iPTMnet" id="Q00416"/>
<dbReference type="PaxDb" id="4932-YLR430W"/>
<dbReference type="PeptideAtlas" id="Q00416"/>
<dbReference type="TopDownProteomics" id="Q00416"/>
<dbReference type="EnsemblFungi" id="YLR430W_mRNA">
    <property type="protein sequence ID" value="YLR430W"/>
    <property type="gene ID" value="YLR430W"/>
</dbReference>
<dbReference type="GeneID" id="851150"/>
<dbReference type="KEGG" id="sce:YLR430W"/>
<dbReference type="AGR" id="SGD:S000004422"/>
<dbReference type="SGD" id="S000004422">
    <property type="gene designation" value="SEN1"/>
</dbReference>
<dbReference type="VEuPathDB" id="FungiDB:YLR430W"/>
<dbReference type="eggNOG" id="KOG1801">
    <property type="taxonomic scope" value="Eukaryota"/>
</dbReference>
<dbReference type="GeneTree" id="ENSGT00940000174323"/>
<dbReference type="HOGENOM" id="CLU_000459_2_0_1"/>
<dbReference type="InParanoid" id="Q00416"/>
<dbReference type="OMA" id="PWHQSEL"/>
<dbReference type="OrthoDB" id="6513042at2759"/>
<dbReference type="BioCyc" id="YEAST:G3O-32489-MONOMER"/>
<dbReference type="BRENDA" id="3.6.4.12">
    <property type="organism ID" value="984"/>
</dbReference>
<dbReference type="BioGRID-ORCS" id="851150">
    <property type="hits" value="6 hits in 10 CRISPR screens"/>
</dbReference>
<dbReference type="PRO" id="PR:Q00416"/>
<dbReference type="Proteomes" id="UP000002311">
    <property type="component" value="Chromosome XII"/>
</dbReference>
<dbReference type="RNAct" id="Q00416">
    <property type="molecule type" value="protein"/>
</dbReference>
<dbReference type="GO" id="GO:0005737">
    <property type="term" value="C:cytoplasm"/>
    <property type="evidence" value="ECO:0000314"/>
    <property type="project" value="SGD"/>
</dbReference>
<dbReference type="GO" id="GO:0035649">
    <property type="term" value="C:Nrd1 complex"/>
    <property type="evidence" value="ECO:0000314"/>
    <property type="project" value="SGD"/>
</dbReference>
<dbReference type="GO" id="GO:0016604">
    <property type="term" value="C:nuclear body"/>
    <property type="evidence" value="ECO:0000318"/>
    <property type="project" value="GO_Central"/>
</dbReference>
<dbReference type="GO" id="GO:0005730">
    <property type="term" value="C:nucleolus"/>
    <property type="evidence" value="ECO:0000314"/>
    <property type="project" value="ComplexPortal"/>
</dbReference>
<dbReference type="GO" id="GO:0005634">
    <property type="term" value="C:nucleus"/>
    <property type="evidence" value="ECO:0000314"/>
    <property type="project" value="SGD"/>
</dbReference>
<dbReference type="GO" id="GO:0005657">
    <property type="term" value="C:replication fork"/>
    <property type="evidence" value="ECO:0000314"/>
    <property type="project" value="SGD"/>
</dbReference>
<dbReference type="GO" id="GO:0032040">
    <property type="term" value="C:small-subunit processome"/>
    <property type="evidence" value="ECO:0000353"/>
    <property type="project" value="ComplexPortal"/>
</dbReference>
<dbReference type="GO" id="GO:0043139">
    <property type="term" value="F:5'-3' DNA helicase activity"/>
    <property type="evidence" value="ECO:0000314"/>
    <property type="project" value="SGD"/>
</dbReference>
<dbReference type="GO" id="GO:0033678">
    <property type="term" value="F:5'-3' DNA/RNA helicase activity"/>
    <property type="evidence" value="ECO:0000314"/>
    <property type="project" value="SGD"/>
</dbReference>
<dbReference type="GO" id="GO:0005524">
    <property type="term" value="F:ATP binding"/>
    <property type="evidence" value="ECO:0007669"/>
    <property type="project" value="UniProtKB-KW"/>
</dbReference>
<dbReference type="GO" id="GO:0016787">
    <property type="term" value="F:hydrolase activity"/>
    <property type="evidence" value="ECO:0007669"/>
    <property type="project" value="UniProtKB-KW"/>
</dbReference>
<dbReference type="GO" id="GO:0003729">
    <property type="term" value="F:mRNA binding"/>
    <property type="evidence" value="ECO:0007005"/>
    <property type="project" value="SGD"/>
</dbReference>
<dbReference type="GO" id="GO:0019904">
    <property type="term" value="F:protein domain specific binding"/>
    <property type="evidence" value="ECO:0000314"/>
    <property type="project" value="SGD"/>
</dbReference>
<dbReference type="GO" id="GO:0003723">
    <property type="term" value="F:RNA binding"/>
    <property type="evidence" value="ECO:0000318"/>
    <property type="project" value="GO_Central"/>
</dbReference>
<dbReference type="GO" id="GO:0001147">
    <property type="term" value="F:transcription termination site sequence-specific DNA binding"/>
    <property type="evidence" value="ECO:0000318"/>
    <property type="project" value="GO_Central"/>
</dbReference>
<dbReference type="GO" id="GO:0045454">
    <property type="term" value="P:cell redox homeostasis"/>
    <property type="evidence" value="ECO:0000315"/>
    <property type="project" value="SGD"/>
</dbReference>
<dbReference type="GO" id="GO:0006974">
    <property type="term" value="P:DNA damage response"/>
    <property type="evidence" value="ECO:0000315"/>
    <property type="project" value="SGD"/>
</dbReference>
<dbReference type="GO" id="GO:0045005">
    <property type="term" value="P:DNA-templated DNA replication maintenance of fidelity"/>
    <property type="evidence" value="ECO:0000315"/>
    <property type="project" value="SGD"/>
</dbReference>
<dbReference type="GO" id="GO:0006353">
    <property type="term" value="P:DNA-templated transcription termination"/>
    <property type="evidence" value="ECO:0000315"/>
    <property type="project" value="SGD"/>
</dbReference>
<dbReference type="GO" id="GO:0030490">
    <property type="term" value="P:maturation of SSU-rRNA"/>
    <property type="evidence" value="ECO:0000303"/>
    <property type="project" value="ComplexPortal"/>
</dbReference>
<dbReference type="GO" id="GO:0031124">
    <property type="term" value="P:mRNA 3'-end processing"/>
    <property type="evidence" value="ECO:0000315"/>
    <property type="project" value="SGD"/>
</dbReference>
<dbReference type="GO" id="GO:0060257">
    <property type="term" value="P:negative regulation of flocculation"/>
    <property type="evidence" value="ECO:0000315"/>
    <property type="project" value="CACAO"/>
</dbReference>
<dbReference type="GO" id="GO:0006357">
    <property type="term" value="P:regulation of transcription by RNA polymerase II"/>
    <property type="evidence" value="ECO:0000315"/>
    <property type="project" value="SGD"/>
</dbReference>
<dbReference type="GO" id="GO:0006364">
    <property type="term" value="P:rRNA processing"/>
    <property type="evidence" value="ECO:0000315"/>
    <property type="project" value="SGD"/>
</dbReference>
<dbReference type="GO" id="GO:0031126">
    <property type="term" value="P:sno(s)RNA 3'-end processing"/>
    <property type="evidence" value="ECO:0000315"/>
    <property type="project" value="SGD"/>
</dbReference>
<dbReference type="GO" id="GO:0016180">
    <property type="term" value="P:snRNA processing"/>
    <property type="evidence" value="ECO:0000315"/>
    <property type="project" value="SGD"/>
</dbReference>
<dbReference type="GO" id="GO:0006369">
    <property type="term" value="P:termination of RNA polymerase II transcription"/>
    <property type="evidence" value="ECO:0000315"/>
    <property type="project" value="SGD"/>
</dbReference>
<dbReference type="GO" id="GO:0006386">
    <property type="term" value="P:termination of RNA polymerase III transcription"/>
    <property type="evidence" value="ECO:0000314"/>
    <property type="project" value="SGD"/>
</dbReference>
<dbReference type="GO" id="GO:0006283">
    <property type="term" value="P:transcription-coupled nucleotide-excision repair"/>
    <property type="evidence" value="ECO:0000316"/>
    <property type="project" value="SGD"/>
</dbReference>
<dbReference type="GO" id="GO:0008033">
    <property type="term" value="P:tRNA processing"/>
    <property type="evidence" value="ECO:0000315"/>
    <property type="project" value="SGD"/>
</dbReference>
<dbReference type="CDD" id="cd21408">
    <property type="entry name" value="1B_Sen1p-like"/>
    <property type="match status" value="1"/>
</dbReference>
<dbReference type="CDD" id="cd18042">
    <property type="entry name" value="DEXXQc_SETX"/>
    <property type="match status" value="1"/>
</dbReference>
<dbReference type="CDD" id="cd18808">
    <property type="entry name" value="SF1_C_Upf1"/>
    <property type="match status" value="1"/>
</dbReference>
<dbReference type="FunFam" id="3.40.50.300:FF:000326">
    <property type="entry name" value="P-loop containing nucleoside triphosphate hydrolase"/>
    <property type="match status" value="1"/>
</dbReference>
<dbReference type="FunFam" id="3.40.50.300:FF:001152">
    <property type="entry name" value="tRNA-splicing endonuclease, putative"/>
    <property type="match status" value="1"/>
</dbReference>
<dbReference type="Gene3D" id="3.40.50.300">
    <property type="entry name" value="P-loop containing nucleotide triphosphate hydrolases"/>
    <property type="match status" value="2"/>
</dbReference>
<dbReference type="InterPro" id="IPR045055">
    <property type="entry name" value="DNA2/NAM7-like"/>
</dbReference>
<dbReference type="InterPro" id="IPR041679">
    <property type="entry name" value="DNA2/NAM7-like_C"/>
</dbReference>
<dbReference type="InterPro" id="IPR041677">
    <property type="entry name" value="DNA2/NAM7_AAA_11"/>
</dbReference>
<dbReference type="InterPro" id="IPR044340">
    <property type="entry name" value="Helicase_Sen1_1B_dom"/>
</dbReference>
<dbReference type="InterPro" id="IPR024481">
    <property type="entry name" value="Helicase_Sen1_N"/>
</dbReference>
<dbReference type="InterPro" id="IPR027417">
    <property type="entry name" value="P-loop_NTPase"/>
</dbReference>
<dbReference type="InterPro" id="IPR056474">
    <property type="entry name" value="SEN1_barrel"/>
</dbReference>
<dbReference type="InterPro" id="IPR047187">
    <property type="entry name" value="SF1_C_Upf1"/>
</dbReference>
<dbReference type="PANTHER" id="PTHR10887">
    <property type="entry name" value="DNA2/NAM7 HELICASE FAMILY"/>
    <property type="match status" value="1"/>
</dbReference>
<dbReference type="PANTHER" id="PTHR10887:SF495">
    <property type="entry name" value="HELICASE SENATAXIN ISOFORM X1-RELATED"/>
    <property type="match status" value="1"/>
</dbReference>
<dbReference type="Pfam" id="PF13086">
    <property type="entry name" value="AAA_11"/>
    <property type="match status" value="1"/>
</dbReference>
<dbReference type="Pfam" id="PF13087">
    <property type="entry name" value="AAA_12"/>
    <property type="match status" value="1"/>
</dbReference>
<dbReference type="Pfam" id="PF23576">
    <property type="entry name" value="SEN1_barrel"/>
    <property type="match status" value="1"/>
</dbReference>
<dbReference type="Pfam" id="PF12726">
    <property type="entry name" value="SEN1_N"/>
    <property type="match status" value="1"/>
</dbReference>
<dbReference type="SUPFAM" id="SSF52540">
    <property type="entry name" value="P-loop containing nucleoside triphosphate hydrolases"/>
    <property type="match status" value="1"/>
</dbReference>
<reference key="1">
    <citation type="journal article" date="1997" name="Nature">
        <title>The nucleotide sequence of Saccharomyces cerevisiae chromosome XII.</title>
        <authorList>
            <person name="Johnston M."/>
            <person name="Hillier L.W."/>
            <person name="Riles L."/>
            <person name="Albermann K."/>
            <person name="Andre B."/>
            <person name="Ansorge W."/>
            <person name="Benes V."/>
            <person name="Brueckner M."/>
            <person name="Delius H."/>
            <person name="Dubois E."/>
            <person name="Duesterhoeft A."/>
            <person name="Entian K.-D."/>
            <person name="Floeth M."/>
            <person name="Goffeau A."/>
            <person name="Hebling U."/>
            <person name="Heumann K."/>
            <person name="Heuss-Neitzel D."/>
            <person name="Hilbert H."/>
            <person name="Hilger F."/>
            <person name="Kleine K."/>
            <person name="Koetter P."/>
            <person name="Louis E.J."/>
            <person name="Messenguy F."/>
            <person name="Mewes H.-W."/>
            <person name="Miosga T."/>
            <person name="Moestl D."/>
            <person name="Mueller-Auer S."/>
            <person name="Nentwich U."/>
            <person name="Obermaier B."/>
            <person name="Piravandi E."/>
            <person name="Pohl T.M."/>
            <person name="Portetelle D."/>
            <person name="Purnelle B."/>
            <person name="Rechmann S."/>
            <person name="Rieger M."/>
            <person name="Rinke M."/>
            <person name="Rose M."/>
            <person name="Scharfe M."/>
            <person name="Scherens B."/>
            <person name="Scholler P."/>
            <person name="Schwager C."/>
            <person name="Schwarz S."/>
            <person name="Underwood A.P."/>
            <person name="Urrestarazu L.A."/>
            <person name="Vandenbol M."/>
            <person name="Verhasselt P."/>
            <person name="Vierendeels F."/>
            <person name="Voet M."/>
            <person name="Volckaert G."/>
            <person name="Voss H."/>
            <person name="Wambutt R."/>
            <person name="Wedler E."/>
            <person name="Wedler H."/>
            <person name="Zimmermann F.K."/>
            <person name="Zollner A."/>
            <person name="Hani J."/>
            <person name="Hoheisel J.D."/>
        </authorList>
    </citation>
    <scope>NUCLEOTIDE SEQUENCE [LARGE SCALE GENOMIC DNA]</scope>
    <source>
        <strain>ATCC 204508 / S288c</strain>
    </source>
</reference>
<reference key="2">
    <citation type="journal article" date="2014" name="G3 (Bethesda)">
        <title>The reference genome sequence of Saccharomyces cerevisiae: Then and now.</title>
        <authorList>
            <person name="Engel S.R."/>
            <person name="Dietrich F.S."/>
            <person name="Fisk D.G."/>
            <person name="Binkley G."/>
            <person name="Balakrishnan R."/>
            <person name="Costanzo M.C."/>
            <person name="Dwight S.S."/>
            <person name="Hitz B.C."/>
            <person name="Karra K."/>
            <person name="Nash R.S."/>
            <person name="Weng S."/>
            <person name="Wong E.D."/>
            <person name="Lloyd P."/>
            <person name="Skrzypek M.S."/>
            <person name="Miyasato S.R."/>
            <person name="Simison M."/>
            <person name="Cherry J.M."/>
        </authorList>
    </citation>
    <scope>GENOME REANNOTATION</scope>
    <source>
        <strain>ATCC 204508 / S288c</strain>
    </source>
</reference>
<reference key="3">
    <citation type="journal article" date="1992" name="Mol. Cell. Biol.">
        <title>SEN1, a positive effector of tRNA-splicing endonuclease in Saccharomyces cerevisiae.</title>
        <authorList>
            <person name="Demarini D.J."/>
            <person name="Winey M."/>
            <person name="Ursic D."/>
            <person name="Webb F."/>
            <person name="Culbertson M.R."/>
        </authorList>
    </citation>
    <scope>NUCLEOTIDE SEQUENCE [MRNA] OF 31-2231</scope>
    <scope>MUTAGENESIS OF GLY-1747</scope>
</reference>
<reference key="4">
    <citation type="journal article" date="1995" name="Mol. Gen. Genet.">
        <title>Inactivation of the yeast Sen1 protein affects the localization of nucleolar proteins.</title>
        <authorList>
            <person name="Ursic D."/>
            <person name="DeMarini D.J."/>
            <person name="Culbertson M.R."/>
        </authorList>
    </citation>
    <scope>SUBCELLULAR LOCATION</scope>
</reference>
<reference key="5">
    <citation type="journal article" date="1996" name="Mol. Cell. Biol.">
        <title>Repression of gene expression by an exogenous sequence element acting in concert with a heterogeneous nuclear ribonucleoprotein-like protein, Nrd1, and the putative helicase Sen1.</title>
        <authorList>
            <person name="Steinmetz E.J."/>
            <person name="Brow D.A."/>
        </authorList>
    </citation>
    <scope>FUNCTION</scope>
</reference>
<reference key="6">
    <citation type="journal article" date="1997" name="Nucleic Acids Res.">
        <title>The yeast SEN1 gene is required for the processing of diverse RNA classes.</title>
        <authorList>
            <person name="Ursic D."/>
            <person name="Himmel K.L."/>
            <person name="Gurley K.A."/>
            <person name="Webb F."/>
            <person name="Culbertson M.R."/>
        </authorList>
    </citation>
    <scope>FUNCTION</scope>
</reference>
<reference key="7">
    <citation type="journal article" date="1998" name="Mol. Cell. Biol.">
        <title>The putative nucleic acid helicase Sen1p is required for formation and stability of termini and for maximal rates of synthesis and levels of accumulation of small nucleolar RNAs in Saccharomyces cerevisiae.</title>
        <authorList>
            <person name="Rasmussen T.P."/>
            <person name="Culbertson M.R."/>
        </authorList>
    </citation>
    <scope>FUNCTION</scope>
</reference>
<reference key="8">
    <citation type="journal article" date="2001" name="Nature">
        <title>RNA-binding protein Nrd1 directs poly(A)-independent 3'-end formation of RNA polymerase II transcripts.</title>
        <authorList>
            <person name="Steinmetz E.J."/>
            <person name="Conrad N.K."/>
            <person name="Brow D.A."/>
            <person name="Corden J.L."/>
        </authorList>
    </citation>
    <scope>FUNCTION</scope>
</reference>
<reference key="9">
    <citation type="journal article" date="2003" name="Nature">
        <title>Global analysis of protein localization in budding yeast.</title>
        <authorList>
            <person name="Huh W.-K."/>
            <person name="Falvo J.V."/>
            <person name="Gerke L.C."/>
            <person name="Carroll A.S."/>
            <person name="Howson R.W."/>
            <person name="Weissman J.S."/>
            <person name="O'Shea E.K."/>
        </authorList>
    </citation>
    <scope>SUBCELLULAR LOCATION [LARGE SCALE ANALYSIS]</scope>
</reference>
<reference key="10">
    <citation type="journal article" date="2003" name="Nature">
        <title>Global analysis of protein expression in yeast.</title>
        <authorList>
            <person name="Ghaemmaghami S."/>
            <person name="Huh W.-K."/>
            <person name="Bower K."/>
            <person name="Howson R.W."/>
            <person name="Belle A."/>
            <person name="Dephoure N."/>
            <person name="O'Shea E.K."/>
            <person name="Weissman J.S."/>
        </authorList>
    </citation>
    <scope>LEVEL OF PROTEIN EXPRESSION [LARGE SCALE ANALYSIS]</scope>
</reference>
<reference key="11">
    <citation type="journal article" date="2004" name="Nucleic Acids Res.">
        <title>Multiple protein/protein and protein/RNA interactions suggest roles for yeast DNA/RNA helicase Sen1p in transcription, transcription-coupled DNA repair and RNA processing.</title>
        <authorList>
            <person name="Ursic D."/>
            <person name="Chinchilla K."/>
            <person name="Finkel J.S."/>
            <person name="Culbertson M.R."/>
        </authorList>
    </citation>
    <scope>FUNCTION</scope>
    <scope>INTERACTION WITH RAD2; RNT1 AND RPB1</scope>
</reference>
<reference key="12">
    <citation type="journal article" date="2006" name="Mol. Cell">
        <title>Genome-wide distribution of yeast RNA polymerase II and its control by Sen1 helicase.</title>
        <authorList>
            <person name="Steinmetz E.J."/>
            <person name="Warren C.L."/>
            <person name="Kuehner J.N."/>
            <person name="Panbehi B."/>
            <person name="Ansari A.Z."/>
            <person name="Brow D.A."/>
        </authorList>
    </citation>
    <scope>FUNCTION</scope>
    <scope>MUTAGENESIS OF GLU-1597</scope>
</reference>
<accession>Q00416</accession>
<accession>D6VZ65</accession>
<accession>E9P9Z4</accession>
<accession>Q06448</accession>
<gene>
    <name type="primary">SEN1</name>
    <name type="ordered locus">YLR430W</name>
    <name type="ORF">L9576.1</name>
</gene>
<keyword id="KW-0002">3D-structure</keyword>
<keyword id="KW-0067">ATP-binding</keyword>
<keyword id="KW-0347">Helicase</keyword>
<keyword id="KW-0378">Hydrolase</keyword>
<keyword id="KW-0507">mRNA processing</keyword>
<keyword id="KW-0547">Nucleotide-binding</keyword>
<keyword id="KW-0539">Nucleus</keyword>
<keyword id="KW-1185">Reference proteome</keyword>
<keyword id="KW-0698">rRNA processing</keyword>
<keyword id="KW-0819">tRNA processing</keyword>
<comment type="function">
    <text evidence="4 7 9 11 12 13">ATP-dependent 5'-&gt;3' DNA/RNA helicase required for the expression and maturation of diverse classes of non-protein-coding RNAs like precursor tRNAs, rRNAs and small nuclear (snRNA) and nucleolar (snoRNA) RNAs. Directs RNA polymerase II transcription termination on snoRNAs as well as on several short protein-coding genes. May also play a role in transcription-coupled nucleotide excision repair.</text>
</comment>
<comment type="subunit">
    <text evidence="7">Interacts with RAD2, RNT1 and RPB1. Binds to multiple snoRNAs.</text>
</comment>
<comment type="interaction">
    <interactant intactId="EBI-16945">
        <id>Q00416</id>
    </interactant>
    <interactant intactId="EBI-13715">
        <id>P32598</id>
        <label>GLC7</label>
    </interactant>
    <organismsDiffer>false</organismsDiffer>
    <experiments>9</experiments>
</comment>
<comment type="interaction">
    <interactant intactId="EBI-16945">
        <id>Q00416</id>
    </interactant>
    <interactant intactId="EBI-11776">
        <id>P38996</id>
        <label>NAB3</label>
    </interactant>
    <organismsDiffer>false</organismsDiffer>
    <experiments>5</experiments>
</comment>
<comment type="interaction">
    <interactant intactId="EBI-16945">
        <id>Q00416</id>
    </interactant>
    <interactant intactId="EBI-14757">
        <id>P07276</id>
        <label>RAD2</label>
    </interactant>
    <organismsDiffer>false</organismsDiffer>
    <experiments>3</experiments>
</comment>
<comment type="interaction">
    <interactant intactId="EBI-16945">
        <id>Q00416</id>
    </interactant>
    <interactant intactId="EBI-15673">
        <id>Q02555</id>
        <label>RNT1</label>
    </interactant>
    <organismsDiffer>false</organismsDiffer>
    <experiments>2</experiments>
</comment>
<comment type="interaction">
    <interactant intactId="EBI-16945">
        <id>Q00416</id>
    </interactant>
    <interactant intactId="EBI-15760">
        <id>P04050</id>
        <label>RPO21</label>
    </interactant>
    <organismsDiffer>false</organismsDiffer>
    <experiments>5</experiments>
</comment>
<comment type="subcellular location">
    <subcellularLocation>
        <location evidence="5 10">Nucleus</location>
    </subcellularLocation>
</comment>
<comment type="miscellaneous">
    <text evidence="6">Present with 125 molecules/cell in log phase SD medium.</text>
</comment>
<comment type="similarity">
    <text evidence="14">Belongs to the DNA2/NAM7 helicase family.</text>
</comment>
<comment type="sequence caution" evidence="14">
    <conflict type="frameshift">
        <sequence resource="EMBL-CDS" id="AAB63976"/>
    </conflict>
</comment>
<protein>
    <recommendedName>
        <fullName>Helicase SEN1</fullName>
        <ecNumber>3.6.4.-</ecNumber>
    </recommendedName>
    <alternativeName>
        <fullName>tRNA-splicing endonuclease positive effector</fullName>
    </alternativeName>
</protein>
<feature type="chain" id="PRO_0000080722" description="Helicase SEN1">
    <location>
        <begin position="1"/>
        <end position="2231"/>
    </location>
</feature>
<feature type="region of interest" description="Disordered" evidence="3">
    <location>
        <begin position="1"/>
        <end position="24"/>
    </location>
</feature>
<feature type="region of interest" description="Disordered" evidence="3">
    <location>
        <begin position="1032"/>
        <end position="1061"/>
    </location>
</feature>
<feature type="region of interest" description="Disordered" evidence="3">
    <location>
        <begin position="1491"/>
        <end position="1511"/>
    </location>
</feature>
<feature type="region of interest" description="Disordered" evidence="3">
    <location>
        <begin position="1894"/>
        <end position="1993"/>
    </location>
</feature>
<feature type="region of interest" description="Disordered" evidence="3">
    <location>
        <begin position="2032"/>
        <end position="2231"/>
    </location>
</feature>
<feature type="short sequence motif" description="Nuclear localization signal" evidence="2">
    <location>
        <begin position="1909"/>
        <end position="1927"/>
    </location>
</feature>
<feature type="compositionally biased region" description="Low complexity" evidence="3">
    <location>
        <begin position="1"/>
        <end position="17"/>
    </location>
</feature>
<feature type="compositionally biased region" description="Polar residues" evidence="3">
    <location>
        <begin position="1499"/>
        <end position="1510"/>
    </location>
</feature>
<feature type="compositionally biased region" description="Basic residues" evidence="3">
    <location>
        <begin position="1923"/>
        <end position="1937"/>
    </location>
</feature>
<feature type="compositionally biased region" description="Basic and acidic residues" evidence="3">
    <location>
        <begin position="1938"/>
        <end position="1950"/>
    </location>
</feature>
<feature type="compositionally biased region" description="Acidic residues" evidence="3">
    <location>
        <begin position="2048"/>
        <end position="2058"/>
    </location>
</feature>
<feature type="compositionally biased region" description="Polar residues" evidence="3">
    <location>
        <begin position="2060"/>
        <end position="2088"/>
    </location>
</feature>
<feature type="compositionally biased region" description="Polar residues" evidence="3">
    <location>
        <begin position="2095"/>
        <end position="2104"/>
    </location>
</feature>
<feature type="compositionally biased region" description="Low complexity" evidence="3">
    <location>
        <begin position="2114"/>
        <end position="2123"/>
    </location>
</feature>
<feature type="compositionally biased region" description="Polar residues" evidence="3">
    <location>
        <begin position="2134"/>
        <end position="2160"/>
    </location>
</feature>
<feature type="compositionally biased region" description="Low complexity" evidence="3">
    <location>
        <begin position="2210"/>
        <end position="2220"/>
    </location>
</feature>
<feature type="binding site" evidence="1">
    <location>
        <position position="1339"/>
    </location>
    <ligand>
        <name>ATP</name>
        <dbReference type="ChEBI" id="CHEBI:30616"/>
    </ligand>
</feature>
<feature type="binding site" evidence="1">
    <location>
        <begin position="1360"/>
        <end position="1364"/>
    </location>
    <ligand>
        <name>ATP</name>
        <dbReference type="ChEBI" id="CHEBI:30616"/>
    </ligand>
</feature>
<feature type="binding site" evidence="1">
    <location>
        <position position="1619"/>
    </location>
    <ligand>
        <name>ATP</name>
        <dbReference type="ChEBI" id="CHEBI:30616"/>
    </ligand>
</feature>
<feature type="binding site" evidence="1">
    <location>
        <position position="1655"/>
    </location>
    <ligand>
        <name>ATP</name>
        <dbReference type="ChEBI" id="CHEBI:30616"/>
    </ligand>
</feature>
<feature type="binding site" evidence="1">
    <location>
        <position position="1787"/>
    </location>
    <ligand>
        <name>ATP</name>
        <dbReference type="ChEBI" id="CHEBI:30616"/>
    </ligand>
</feature>
<feature type="mutagenesis site" description="Causes read-through of both a snoRNA gene terminator and the poly(A) site of a protein-coding gene." evidence="9">
    <original>E</original>
    <variation>K</variation>
    <location>
        <position position="1597"/>
    </location>
</feature>
<feature type="mutagenesis site" description="In SEN1-1; gives rise to a temperature-sensitive mutant." evidence="8">
    <original>G</original>
    <variation>A</variation>
    <location>
        <position position="1747"/>
    </location>
</feature>
<feature type="helix" evidence="15">
    <location>
        <begin position="1100"/>
        <end position="1109"/>
    </location>
</feature>
<feature type="helix" evidence="15">
    <location>
        <begin position="1114"/>
        <end position="1120"/>
    </location>
</feature>
<feature type="strand" evidence="15">
    <location>
        <begin position="1129"/>
        <end position="1133"/>
    </location>
</feature>
<feature type="helix" evidence="15">
    <location>
        <begin position="1137"/>
        <end position="1139"/>
    </location>
</feature>
<feature type="helix" evidence="15">
    <location>
        <begin position="1150"/>
        <end position="1174"/>
    </location>
</feature>
<feature type="strand" evidence="15">
    <location>
        <begin position="1181"/>
        <end position="1191"/>
    </location>
</feature>
<feature type="strand" evidence="15">
    <location>
        <begin position="1194"/>
        <end position="1202"/>
    </location>
</feature>
<feature type="helix" evidence="15">
    <location>
        <begin position="1203"/>
        <end position="1208"/>
    </location>
</feature>
<feature type="strand" evidence="15">
    <location>
        <begin position="1215"/>
        <end position="1220"/>
    </location>
</feature>
<feature type="helix" evidence="15">
    <location>
        <begin position="1233"/>
        <end position="1237"/>
    </location>
</feature>
<feature type="strand" evidence="15">
    <location>
        <begin position="1240"/>
        <end position="1252"/>
    </location>
</feature>
<feature type="strand" evidence="15">
    <location>
        <begin position="1256"/>
        <end position="1265"/>
    </location>
</feature>
<feature type="helix" evidence="15">
    <location>
        <begin position="1269"/>
        <end position="1273"/>
    </location>
</feature>
<feature type="strand" evidence="15">
    <location>
        <begin position="1279"/>
        <end position="1287"/>
    </location>
</feature>
<feature type="helix" evidence="15">
    <location>
        <begin position="1289"/>
        <end position="1300"/>
    </location>
</feature>
<feature type="helix" evidence="15">
    <location>
        <begin position="1301"/>
        <end position="1303"/>
    </location>
</feature>
<feature type="helix" evidence="15">
    <location>
        <begin position="1307"/>
        <end position="1312"/>
    </location>
</feature>
<feature type="helix" evidence="15">
    <location>
        <begin position="1323"/>
        <end position="1333"/>
    </location>
</feature>
<feature type="helix" evidence="15">
    <location>
        <begin position="1337"/>
        <end position="1348"/>
    </location>
</feature>
<feature type="strand" evidence="15">
    <location>
        <begin position="1351"/>
        <end position="1356"/>
    </location>
</feature>
<feature type="helix" evidence="15">
    <location>
        <begin position="1363"/>
        <end position="1379"/>
    </location>
</feature>
<feature type="strand" evidence="15">
    <location>
        <begin position="1406"/>
        <end position="1412"/>
    </location>
</feature>
<feature type="helix" evidence="15">
    <location>
        <begin position="1413"/>
        <end position="1423"/>
    </location>
</feature>
<feature type="strand" evidence="15">
    <location>
        <begin position="1439"/>
        <end position="1441"/>
    </location>
</feature>
<feature type="turn" evidence="17">
    <location>
        <begin position="1445"/>
        <end position="1447"/>
    </location>
</feature>
<feature type="helix" evidence="15">
    <location>
        <begin position="1450"/>
        <end position="1453"/>
    </location>
</feature>
<feature type="helix" evidence="15">
    <location>
        <begin position="1457"/>
        <end position="1465"/>
    </location>
</feature>
<feature type="turn" evidence="15">
    <location>
        <begin position="1466"/>
        <end position="1469"/>
    </location>
</feature>
<feature type="helix" evidence="15">
    <location>
        <begin position="1544"/>
        <end position="1561"/>
    </location>
</feature>
<feature type="strand" evidence="15">
    <location>
        <begin position="1563"/>
        <end position="1568"/>
    </location>
</feature>
<feature type="helix" evidence="15">
    <location>
        <begin position="1570"/>
        <end position="1573"/>
    </location>
</feature>
<feature type="helix" evidence="15">
    <location>
        <begin position="1575"/>
        <end position="1578"/>
    </location>
</feature>
<feature type="strand" evidence="15">
    <location>
        <begin position="1586"/>
        <end position="1591"/>
    </location>
</feature>
<feature type="helix" evidence="17">
    <location>
        <begin position="1592"/>
        <end position="1594"/>
    </location>
</feature>
<feature type="helix" evidence="15">
    <location>
        <begin position="1597"/>
        <end position="1601"/>
    </location>
</feature>
<feature type="helix" evidence="15">
    <location>
        <begin position="1602"/>
        <end position="1606"/>
    </location>
</feature>
<feature type="strand" evidence="15">
    <location>
        <begin position="1610"/>
        <end position="1615"/>
    </location>
</feature>
<feature type="strand" evidence="15">
    <location>
        <begin position="1617"/>
        <end position="1619"/>
    </location>
</feature>
<feature type="helix" evidence="15">
    <location>
        <begin position="1627"/>
        <end position="1631"/>
    </location>
</feature>
<feature type="turn" evidence="15">
    <location>
        <begin position="1632"/>
        <end position="1635"/>
    </location>
</feature>
<feature type="helix" evidence="15">
    <location>
        <begin position="1638"/>
        <end position="1643"/>
    </location>
</feature>
<feature type="strand" evidence="17">
    <location>
        <begin position="1653"/>
        <end position="1657"/>
    </location>
</feature>
<feature type="helix" evidence="15">
    <location>
        <begin position="1659"/>
        <end position="1669"/>
    </location>
</feature>
<feature type="helix" evidence="15">
    <location>
        <begin position="1680"/>
        <end position="1683"/>
    </location>
</feature>
<feature type="helix" evidence="15">
    <location>
        <begin position="1687"/>
        <end position="1690"/>
    </location>
</feature>
<feature type="strand" evidence="15">
    <location>
        <begin position="1696"/>
        <end position="1702"/>
    </location>
</feature>
<feature type="strand" evidence="17">
    <location>
        <begin position="1707"/>
        <end position="1709"/>
    </location>
</feature>
<feature type="turn" evidence="17">
    <location>
        <begin position="1711"/>
        <end position="1713"/>
    </location>
</feature>
<feature type="strand" evidence="17">
    <location>
        <begin position="1716"/>
        <end position="1718"/>
    </location>
</feature>
<feature type="helix" evidence="15">
    <location>
        <begin position="1719"/>
        <end position="1736"/>
    </location>
</feature>
<feature type="turn" evidence="15">
    <location>
        <begin position="1737"/>
        <end position="1739"/>
    </location>
</feature>
<feature type="strand" evidence="15">
    <location>
        <begin position="1746"/>
        <end position="1751"/>
    </location>
</feature>
<feature type="helix" evidence="15">
    <location>
        <begin position="1753"/>
        <end position="1767"/>
    </location>
</feature>
<feature type="helix" evidence="15">
    <location>
        <begin position="1768"/>
        <end position="1771"/>
    </location>
</feature>
<feature type="turn" evidence="15">
    <location>
        <begin position="1772"/>
        <end position="1774"/>
    </location>
</feature>
<feature type="strand" evidence="15">
    <location>
        <begin position="1775"/>
        <end position="1779"/>
    </location>
</feature>
<feature type="turn" evidence="15">
    <location>
        <begin position="1780"/>
        <end position="1785"/>
    </location>
</feature>
<feature type="strand" evidence="15">
    <location>
        <begin position="1788"/>
        <end position="1794"/>
    </location>
</feature>
<feature type="helix" evidence="15">
    <location>
        <begin position="1804"/>
        <end position="1817"/>
    </location>
</feature>
<feature type="strand" evidence="15">
    <location>
        <begin position="1820"/>
        <end position="1829"/>
    </location>
</feature>
<feature type="helix" evidence="15">
    <location>
        <begin position="1831"/>
        <end position="1834"/>
    </location>
</feature>
<feature type="helix" evidence="15">
    <location>
        <begin position="1838"/>
        <end position="1849"/>
    </location>
</feature>
<feature type="strand" evidence="15">
    <location>
        <begin position="1853"/>
        <end position="1856"/>
    </location>
</feature>
<feature type="turn" evidence="15">
    <location>
        <begin position="1858"/>
        <end position="1861"/>
    </location>
</feature>
<feature type="helix" evidence="15">
    <location>
        <begin position="1866"/>
        <end position="1873"/>
    </location>
</feature>
<feature type="helix" evidence="16">
    <location>
        <begin position="1891"/>
        <end position="1893"/>
    </location>
</feature>
<name>SEN1_YEAST</name>